<reference key="1">
    <citation type="journal article" date="2009" name="Stand. Genomic Sci.">
        <title>Complete genome sequence of Methanocorpusculum labreanum type strain Z.</title>
        <authorList>
            <person name="Anderson I.J."/>
            <person name="Sieprawska-Lupa M."/>
            <person name="Goltsman E."/>
            <person name="Lapidus A."/>
            <person name="Copeland A."/>
            <person name="Glavina Del Rio T."/>
            <person name="Tice H."/>
            <person name="Dalin E."/>
            <person name="Barry K."/>
            <person name="Pitluck S."/>
            <person name="Hauser L."/>
            <person name="Land M."/>
            <person name="Lucas S."/>
            <person name="Richardson P."/>
            <person name="Whitman W.B."/>
            <person name="Kyrpides N.C."/>
        </authorList>
    </citation>
    <scope>NUCLEOTIDE SEQUENCE [LARGE SCALE GENOMIC DNA]</scope>
    <source>
        <strain>ATCC 43576 / DSM 4855 / Z</strain>
    </source>
</reference>
<name>PDXT_METLZ</name>
<keyword id="KW-0315">Glutamine amidotransferase</keyword>
<keyword id="KW-0378">Hydrolase</keyword>
<keyword id="KW-0456">Lyase</keyword>
<keyword id="KW-0663">Pyridoxal phosphate</keyword>
<keyword id="KW-1185">Reference proteome</keyword>
<accession>A2SPK0</accession>
<evidence type="ECO:0000255" key="1">
    <source>
        <dbReference type="HAMAP-Rule" id="MF_01615"/>
    </source>
</evidence>
<sequence length="189" mass="20447">MRIGVLALQGAFIEHIRMLERLGVETFEIRNLSDLKEIPDGLILPGGESTVMSKLLQDLGLFEKLRSLIMTGTPVMGTCAGLILLAKYIEGGSPSLGTMDITAVRNAYGRQLGSFQATAPFAGAGNIQMTFIRAPMITHVGKNVKVLAEVDGVVVAAREDNQLVLSFHPELGEDTFVHQYFLEMIAGTN</sequence>
<organism>
    <name type="scientific">Methanocorpusculum labreanum (strain ATCC 43576 / DSM 4855 / Z)</name>
    <dbReference type="NCBI Taxonomy" id="410358"/>
    <lineage>
        <taxon>Archaea</taxon>
        <taxon>Methanobacteriati</taxon>
        <taxon>Methanobacteriota</taxon>
        <taxon>Stenosarchaea group</taxon>
        <taxon>Methanomicrobia</taxon>
        <taxon>Methanomicrobiales</taxon>
        <taxon>Methanocorpusculaceae</taxon>
        <taxon>Methanocorpusculum</taxon>
    </lineage>
</organism>
<comment type="function">
    <text evidence="1">Catalyzes the hydrolysis of glutamine to glutamate and ammonia as part of the biosynthesis of pyridoxal 5'-phosphate. The resulting ammonia molecule is channeled to the active site of PdxS.</text>
</comment>
<comment type="catalytic activity">
    <reaction evidence="1">
        <text>aldehydo-D-ribose 5-phosphate + D-glyceraldehyde 3-phosphate + L-glutamine = pyridoxal 5'-phosphate + L-glutamate + phosphate + 3 H2O + H(+)</text>
        <dbReference type="Rhea" id="RHEA:31507"/>
        <dbReference type="ChEBI" id="CHEBI:15377"/>
        <dbReference type="ChEBI" id="CHEBI:15378"/>
        <dbReference type="ChEBI" id="CHEBI:29985"/>
        <dbReference type="ChEBI" id="CHEBI:43474"/>
        <dbReference type="ChEBI" id="CHEBI:58273"/>
        <dbReference type="ChEBI" id="CHEBI:58359"/>
        <dbReference type="ChEBI" id="CHEBI:59776"/>
        <dbReference type="ChEBI" id="CHEBI:597326"/>
        <dbReference type="EC" id="4.3.3.6"/>
    </reaction>
</comment>
<comment type="catalytic activity">
    <reaction evidence="1">
        <text>L-glutamine + H2O = L-glutamate + NH4(+)</text>
        <dbReference type="Rhea" id="RHEA:15889"/>
        <dbReference type="ChEBI" id="CHEBI:15377"/>
        <dbReference type="ChEBI" id="CHEBI:28938"/>
        <dbReference type="ChEBI" id="CHEBI:29985"/>
        <dbReference type="ChEBI" id="CHEBI:58359"/>
        <dbReference type="EC" id="3.5.1.2"/>
    </reaction>
</comment>
<comment type="pathway">
    <text evidence="1">Cofactor biosynthesis; pyridoxal 5'-phosphate biosynthesis.</text>
</comment>
<comment type="subunit">
    <text evidence="1">In the presence of PdxS, forms a dodecamer of heterodimers. Only shows activity in the heterodimer.</text>
</comment>
<comment type="similarity">
    <text evidence="1">Belongs to the glutaminase PdxT/SNO family.</text>
</comment>
<gene>
    <name evidence="1" type="primary">pdxT</name>
    <name type="ordered locus">Mlab_0078</name>
</gene>
<feature type="chain" id="PRO_0000293018" description="Pyridoxal 5'-phosphate synthase subunit PdxT">
    <location>
        <begin position="1"/>
        <end position="189"/>
    </location>
</feature>
<feature type="active site" description="Nucleophile" evidence="1">
    <location>
        <position position="79"/>
    </location>
</feature>
<feature type="active site" description="Charge relay system" evidence="1">
    <location>
        <position position="168"/>
    </location>
</feature>
<feature type="active site" description="Charge relay system" evidence="1">
    <location>
        <position position="170"/>
    </location>
</feature>
<feature type="binding site" evidence="1">
    <location>
        <begin position="47"/>
        <end position="49"/>
    </location>
    <ligand>
        <name>L-glutamine</name>
        <dbReference type="ChEBI" id="CHEBI:58359"/>
    </ligand>
</feature>
<feature type="binding site" evidence="1">
    <location>
        <position position="105"/>
    </location>
    <ligand>
        <name>L-glutamine</name>
        <dbReference type="ChEBI" id="CHEBI:58359"/>
    </ligand>
</feature>
<feature type="binding site" evidence="1">
    <location>
        <begin position="132"/>
        <end position="133"/>
    </location>
    <ligand>
        <name>L-glutamine</name>
        <dbReference type="ChEBI" id="CHEBI:58359"/>
    </ligand>
</feature>
<proteinExistence type="inferred from homology"/>
<dbReference type="EC" id="4.3.3.6" evidence="1"/>
<dbReference type="EC" id="3.5.1.2" evidence="1"/>
<dbReference type="EMBL" id="CP000559">
    <property type="protein sequence ID" value="ABN06256.1"/>
    <property type="molecule type" value="Genomic_DNA"/>
</dbReference>
<dbReference type="RefSeq" id="WP_011832457.1">
    <property type="nucleotide sequence ID" value="NC_008942.1"/>
</dbReference>
<dbReference type="SMR" id="A2SPK0"/>
<dbReference type="STRING" id="410358.Mlab_0078"/>
<dbReference type="MEROPS" id="C26.A32"/>
<dbReference type="GeneID" id="4794672"/>
<dbReference type="KEGG" id="mla:Mlab_0078"/>
<dbReference type="eggNOG" id="arCOG00034">
    <property type="taxonomic scope" value="Archaea"/>
</dbReference>
<dbReference type="HOGENOM" id="CLU_069674_2_0_2"/>
<dbReference type="OrthoDB" id="26717at2157"/>
<dbReference type="UniPathway" id="UPA00245"/>
<dbReference type="Proteomes" id="UP000000365">
    <property type="component" value="Chromosome"/>
</dbReference>
<dbReference type="GO" id="GO:0005829">
    <property type="term" value="C:cytosol"/>
    <property type="evidence" value="ECO:0007669"/>
    <property type="project" value="TreeGrafter"/>
</dbReference>
<dbReference type="GO" id="GO:1903600">
    <property type="term" value="C:glutaminase complex"/>
    <property type="evidence" value="ECO:0007669"/>
    <property type="project" value="TreeGrafter"/>
</dbReference>
<dbReference type="GO" id="GO:0004359">
    <property type="term" value="F:glutaminase activity"/>
    <property type="evidence" value="ECO:0007669"/>
    <property type="project" value="UniProtKB-UniRule"/>
</dbReference>
<dbReference type="GO" id="GO:0036381">
    <property type="term" value="F:pyridoxal 5'-phosphate synthase (glutamine hydrolysing) activity"/>
    <property type="evidence" value="ECO:0007669"/>
    <property type="project" value="UniProtKB-UniRule"/>
</dbReference>
<dbReference type="GO" id="GO:0006543">
    <property type="term" value="P:glutamine catabolic process"/>
    <property type="evidence" value="ECO:0007669"/>
    <property type="project" value="UniProtKB-UniRule"/>
</dbReference>
<dbReference type="GO" id="GO:0042823">
    <property type="term" value="P:pyridoxal phosphate biosynthetic process"/>
    <property type="evidence" value="ECO:0007669"/>
    <property type="project" value="UniProtKB-UniRule"/>
</dbReference>
<dbReference type="GO" id="GO:0008614">
    <property type="term" value="P:pyridoxine metabolic process"/>
    <property type="evidence" value="ECO:0007669"/>
    <property type="project" value="TreeGrafter"/>
</dbReference>
<dbReference type="CDD" id="cd01749">
    <property type="entry name" value="GATase1_PB"/>
    <property type="match status" value="1"/>
</dbReference>
<dbReference type="FunFam" id="3.40.50.880:FF:000010">
    <property type="entry name" value="uncharacterized protein LOC100176842 isoform X2"/>
    <property type="match status" value="1"/>
</dbReference>
<dbReference type="Gene3D" id="3.40.50.880">
    <property type="match status" value="1"/>
</dbReference>
<dbReference type="HAMAP" id="MF_01615">
    <property type="entry name" value="PdxT"/>
    <property type="match status" value="1"/>
</dbReference>
<dbReference type="InterPro" id="IPR029062">
    <property type="entry name" value="Class_I_gatase-like"/>
</dbReference>
<dbReference type="InterPro" id="IPR002161">
    <property type="entry name" value="PdxT/SNO"/>
</dbReference>
<dbReference type="InterPro" id="IPR021196">
    <property type="entry name" value="PdxT/SNO_CS"/>
</dbReference>
<dbReference type="NCBIfam" id="TIGR03800">
    <property type="entry name" value="PLP_synth_Pdx2"/>
    <property type="match status" value="1"/>
</dbReference>
<dbReference type="PANTHER" id="PTHR31559">
    <property type="entry name" value="PYRIDOXAL 5'-PHOSPHATE SYNTHASE SUBUNIT SNO"/>
    <property type="match status" value="1"/>
</dbReference>
<dbReference type="PANTHER" id="PTHR31559:SF0">
    <property type="entry name" value="PYRIDOXAL 5'-PHOSPHATE SYNTHASE SUBUNIT SNO1-RELATED"/>
    <property type="match status" value="1"/>
</dbReference>
<dbReference type="Pfam" id="PF01174">
    <property type="entry name" value="SNO"/>
    <property type="match status" value="1"/>
</dbReference>
<dbReference type="PIRSF" id="PIRSF005639">
    <property type="entry name" value="Glut_amidoT_SNO"/>
    <property type="match status" value="1"/>
</dbReference>
<dbReference type="SUPFAM" id="SSF52317">
    <property type="entry name" value="Class I glutamine amidotransferase-like"/>
    <property type="match status" value="1"/>
</dbReference>
<dbReference type="PROSITE" id="PS01236">
    <property type="entry name" value="PDXT_SNO_1"/>
    <property type="match status" value="1"/>
</dbReference>
<dbReference type="PROSITE" id="PS51130">
    <property type="entry name" value="PDXT_SNO_2"/>
    <property type="match status" value="1"/>
</dbReference>
<protein>
    <recommendedName>
        <fullName evidence="1">Pyridoxal 5'-phosphate synthase subunit PdxT</fullName>
        <ecNumber evidence="1">4.3.3.6</ecNumber>
    </recommendedName>
    <alternativeName>
        <fullName evidence="1">Pdx2</fullName>
    </alternativeName>
    <alternativeName>
        <fullName evidence="1">Pyridoxal 5'-phosphate synthase glutaminase subunit</fullName>
        <ecNumber evidence="1">3.5.1.2</ecNumber>
    </alternativeName>
</protein>